<dbReference type="EC" id="2.1.1.228" evidence="1"/>
<dbReference type="EMBL" id="CP000606">
    <property type="protein sequence ID" value="ABO22936.1"/>
    <property type="molecule type" value="Genomic_DNA"/>
</dbReference>
<dbReference type="RefSeq" id="WP_011864869.1">
    <property type="nucleotide sequence ID" value="NC_009092.1"/>
</dbReference>
<dbReference type="SMR" id="A3QBT8"/>
<dbReference type="STRING" id="323850.Shew_1065"/>
<dbReference type="KEGG" id="slo:Shew_1065"/>
<dbReference type="eggNOG" id="COG0336">
    <property type="taxonomic scope" value="Bacteria"/>
</dbReference>
<dbReference type="HOGENOM" id="CLU_047363_0_1_6"/>
<dbReference type="OrthoDB" id="9807416at2"/>
<dbReference type="Proteomes" id="UP000001558">
    <property type="component" value="Chromosome"/>
</dbReference>
<dbReference type="GO" id="GO:0005829">
    <property type="term" value="C:cytosol"/>
    <property type="evidence" value="ECO:0007669"/>
    <property type="project" value="TreeGrafter"/>
</dbReference>
<dbReference type="GO" id="GO:0052906">
    <property type="term" value="F:tRNA (guanine(37)-N1)-methyltransferase activity"/>
    <property type="evidence" value="ECO:0007669"/>
    <property type="project" value="UniProtKB-UniRule"/>
</dbReference>
<dbReference type="GO" id="GO:0002939">
    <property type="term" value="P:tRNA N1-guanine methylation"/>
    <property type="evidence" value="ECO:0007669"/>
    <property type="project" value="TreeGrafter"/>
</dbReference>
<dbReference type="CDD" id="cd18080">
    <property type="entry name" value="TrmD-like"/>
    <property type="match status" value="1"/>
</dbReference>
<dbReference type="FunFam" id="1.10.1270.20:FF:000001">
    <property type="entry name" value="tRNA (guanine-N(1)-)-methyltransferase"/>
    <property type="match status" value="1"/>
</dbReference>
<dbReference type="FunFam" id="3.40.1280.10:FF:000001">
    <property type="entry name" value="tRNA (guanine-N(1)-)-methyltransferase"/>
    <property type="match status" value="1"/>
</dbReference>
<dbReference type="Gene3D" id="3.40.1280.10">
    <property type="match status" value="1"/>
</dbReference>
<dbReference type="Gene3D" id="1.10.1270.20">
    <property type="entry name" value="tRNA(m1g37)methyltransferase, domain 2"/>
    <property type="match status" value="1"/>
</dbReference>
<dbReference type="HAMAP" id="MF_00605">
    <property type="entry name" value="TrmD"/>
    <property type="match status" value="1"/>
</dbReference>
<dbReference type="InterPro" id="IPR029028">
    <property type="entry name" value="Alpha/beta_knot_MTases"/>
</dbReference>
<dbReference type="InterPro" id="IPR023148">
    <property type="entry name" value="tRNA_m1G_MeTrfase_C_sf"/>
</dbReference>
<dbReference type="InterPro" id="IPR002649">
    <property type="entry name" value="tRNA_m1G_MeTrfase_TrmD"/>
</dbReference>
<dbReference type="InterPro" id="IPR029026">
    <property type="entry name" value="tRNA_m1G_MTases_N"/>
</dbReference>
<dbReference type="InterPro" id="IPR016009">
    <property type="entry name" value="tRNA_MeTrfase_TRMD/TRM10"/>
</dbReference>
<dbReference type="NCBIfam" id="NF000648">
    <property type="entry name" value="PRK00026.1"/>
    <property type="match status" value="1"/>
</dbReference>
<dbReference type="NCBIfam" id="TIGR00088">
    <property type="entry name" value="trmD"/>
    <property type="match status" value="1"/>
</dbReference>
<dbReference type="PANTHER" id="PTHR46417">
    <property type="entry name" value="TRNA (GUANINE-N(1)-)-METHYLTRANSFERASE"/>
    <property type="match status" value="1"/>
</dbReference>
<dbReference type="PANTHER" id="PTHR46417:SF1">
    <property type="entry name" value="TRNA (GUANINE-N(1)-)-METHYLTRANSFERASE"/>
    <property type="match status" value="1"/>
</dbReference>
<dbReference type="Pfam" id="PF01746">
    <property type="entry name" value="tRNA_m1G_MT"/>
    <property type="match status" value="1"/>
</dbReference>
<dbReference type="PIRSF" id="PIRSF000386">
    <property type="entry name" value="tRNA_mtase"/>
    <property type="match status" value="1"/>
</dbReference>
<dbReference type="SUPFAM" id="SSF75217">
    <property type="entry name" value="alpha/beta knot"/>
    <property type="match status" value="1"/>
</dbReference>
<reference key="1">
    <citation type="submission" date="2007-03" db="EMBL/GenBank/DDBJ databases">
        <title>Complete sequence of Shewanella loihica PV-4.</title>
        <authorList>
            <consortium name="US DOE Joint Genome Institute"/>
            <person name="Copeland A."/>
            <person name="Lucas S."/>
            <person name="Lapidus A."/>
            <person name="Barry K."/>
            <person name="Detter J.C."/>
            <person name="Glavina del Rio T."/>
            <person name="Hammon N."/>
            <person name="Israni S."/>
            <person name="Dalin E."/>
            <person name="Tice H."/>
            <person name="Pitluck S."/>
            <person name="Chain P."/>
            <person name="Malfatti S."/>
            <person name="Shin M."/>
            <person name="Vergez L."/>
            <person name="Schmutz J."/>
            <person name="Larimer F."/>
            <person name="Land M."/>
            <person name="Hauser L."/>
            <person name="Kyrpides N."/>
            <person name="Mikhailova N."/>
            <person name="Romine M.F."/>
            <person name="Serres G."/>
            <person name="Fredrickson J."/>
            <person name="Tiedje J."/>
            <person name="Richardson P."/>
        </authorList>
    </citation>
    <scope>NUCLEOTIDE SEQUENCE [LARGE SCALE GENOMIC DNA]</scope>
    <source>
        <strain>ATCC BAA-1088 / PV-4</strain>
    </source>
</reference>
<comment type="function">
    <text evidence="1">Specifically methylates guanosine-37 in various tRNAs.</text>
</comment>
<comment type="catalytic activity">
    <reaction evidence="1">
        <text>guanosine(37) in tRNA + S-adenosyl-L-methionine = N(1)-methylguanosine(37) in tRNA + S-adenosyl-L-homocysteine + H(+)</text>
        <dbReference type="Rhea" id="RHEA:36899"/>
        <dbReference type="Rhea" id="RHEA-COMP:10145"/>
        <dbReference type="Rhea" id="RHEA-COMP:10147"/>
        <dbReference type="ChEBI" id="CHEBI:15378"/>
        <dbReference type="ChEBI" id="CHEBI:57856"/>
        <dbReference type="ChEBI" id="CHEBI:59789"/>
        <dbReference type="ChEBI" id="CHEBI:73542"/>
        <dbReference type="ChEBI" id="CHEBI:74269"/>
        <dbReference type="EC" id="2.1.1.228"/>
    </reaction>
</comment>
<comment type="subunit">
    <text evidence="1">Homodimer.</text>
</comment>
<comment type="subcellular location">
    <subcellularLocation>
        <location evidence="1">Cytoplasm</location>
    </subcellularLocation>
</comment>
<comment type="similarity">
    <text evidence="1">Belongs to the RNA methyltransferase TrmD family.</text>
</comment>
<keyword id="KW-0963">Cytoplasm</keyword>
<keyword id="KW-0489">Methyltransferase</keyword>
<keyword id="KW-1185">Reference proteome</keyword>
<keyword id="KW-0949">S-adenosyl-L-methionine</keyword>
<keyword id="KW-0808">Transferase</keyword>
<keyword id="KW-0819">tRNA processing</keyword>
<protein>
    <recommendedName>
        <fullName evidence="1">tRNA (guanine-N(1)-)-methyltransferase</fullName>
        <ecNumber evidence="1">2.1.1.228</ecNumber>
    </recommendedName>
    <alternativeName>
        <fullName evidence="1">M1G-methyltransferase</fullName>
    </alternativeName>
    <alternativeName>
        <fullName evidence="1">tRNA [GM37] methyltransferase</fullName>
    </alternativeName>
</protein>
<gene>
    <name evidence="1" type="primary">trmD</name>
    <name type="ordered locus">Shew_1065</name>
</gene>
<feature type="chain" id="PRO_1000006517" description="tRNA (guanine-N(1)-)-methyltransferase">
    <location>
        <begin position="1"/>
        <end position="248"/>
    </location>
</feature>
<feature type="binding site" evidence="1">
    <location>
        <position position="113"/>
    </location>
    <ligand>
        <name>S-adenosyl-L-methionine</name>
        <dbReference type="ChEBI" id="CHEBI:59789"/>
    </ligand>
</feature>
<feature type="binding site" evidence="1">
    <location>
        <begin position="133"/>
        <end position="138"/>
    </location>
    <ligand>
        <name>S-adenosyl-L-methionine</name>
        <dbReference type="ChEBI" id="CHEBI:59789"/>
    </ligand>
</feature>
<name>TRMD_SHELP</name>
<proteinExistence type="inferred from homology"/>
<evidence type="ECO:0000255" key="1">
    <source>
        <dbReference type="HAMAP-Rule" id="MF_00605"/>
    </source>
</evidence>
<organism>
    <name type="scientific">Shewanella loihica (strain ATCC BAA-1088 / PV-4)</name>
    <dbReference type="NCBI Taxonomy" id="323850"/>
    <lineage>
        <taxon>Bacteria</taxon>
        <taxon>Pseudomonadati</taxon>
        <taxon>Pseudomonadota</taxon>
        <taxon>Gammaproteobacteria</taxon>
        <taxon>Alteromonadales</taxon>
        <taxon>Shewanellaceae</taxon>
        <taxon>Shewanella</taxon>
    </lineage>
</organism>
<accession>A3QBT8</accession>
<sequence length="248" mass="27513">MWLGVVTLFPEMFRAVTDFGVTGRAVSNGLLELQTWNPRDFTHDKHRTVDDRPYGGGPGMLMMVQPLRDAIHAAKVAAGDKAKVIYLSPQGRKLTQQGVEELAKSERLILVCGRYEGIDERIIQTEVDEEWSIGDYVLSGGELPAMTLIDSVSRLVPGVLGKQASAEQDSFSDGLLDCPHYTRPESLDGIDVPAVLLSGNHENIRRWRLQQSLGRTLLRRPELFENLALTDEQTKLLAEFVNTAQAGE</sequence>